<accession>Q4A0J7</accession>
<keyword id="KW-0143">Chaperone</keyword>
<keyword id="KW-0963">Cytoplasm</keyword>
<keyword id="KW-0996">Nickel insertion</keyword>
<keyword id="KW-1185">Reference proteome</keyword>
<name>UREF_STAS1</name>
<evidence type="ECO:0000255" key="1">
    <source>
        <dbReference type="HAMAP-Rule" id="MF_01385"/>
    </source>
</evidence>
<dbReference type="EMBL" id="AP008934">
    <property type="protein sequence ID" value="BAE17406.1"/>
    <property type="molecule type" value="Genomic_DNA"/>
</dbReference>
<dbReference type="RefSeq" id="WP_011302248.1">
    <property type="nucleotide sequence ID" value="NZ_MTGA01000037.1"/>
</dbReference>
<dbReference type="SMR" id="Q4A0J7"/>
<dbReference type="DNASU" id="3616067"/>
<dbReference type="GeneID" id="3616067"/>
<dbReference type="KEGG" id="ssp:SSP0261"/>
<dbReference type="PATRIC" id="fig|342451.11.peg.264"/>
<dbReference type="eggNOG" id="COG0830">
    <property type="taxonomic scope" value="Bacteria"/>
</dbReference>
<dbReference type="HOGENOM" id="CLU_049215_4_2_9"/>
<dbReference type="OrthoDB" id="9798772at2"/>
<dbReference type="Proteomes" id="UP000006371">
    <property type="component" value="Chromosome"/>
</dbReference>
<dbReference type="GO" id="GO:0005737">
    <property type="term" value="C:cytoplasm"/>
    <property type="evidence" value="ECO:0007669"/>
    <property type="project" value="UniProtKB-SubCell"/>
</dbReference>
<dbReference type="GO" id="GO:0016151">
    <property type="term" value="F:nickel cation binding"/>
    <property type="evidence" value="ECO:0007669"/>
    <property type="project" value="UniProtKB-UniRule"/>
</dbReference>
<dbReference type="Gene3D" id="1.10.4190.10">
    <property type="entry name" value="Urease accessory protein UreF"/>
    <property type="match status" value="1"/>
</dbReference>
<dbReference type="HAMAP" id="MF_01385">
    <property type="entry name" value="UreF"/>
    <property type="match status" value="1"/>
</dbReference>
<dbReference type="InterPro" id="IPR002639">
    <property type="entry name" value="UreF"/>
</dbReference>
<dbReference type="InterPro" id="IPR038277">
    <property type="entry name" value="UreF_sf"/>
</dbReference>
<dbReference type="PANTHER" id="PTHR33620">
    <property type="entry name" value="UREASE ACCESSORY PROTEIN F"/>
    <property type="match status" value="1"/>
</dbReference>
<dbReference type="PANTHER" id="PTHR33620:SF1">
    <property type="entry name" value="UREASE ACCESSORY PROTEIN F"/>
    <property type="match status" value="1"/>
</dbReference>
<dbReference type="Pfam" id="PF01730">
    <property type="entry name" value="UreF"/>
    <property type="match status" value="1"/>
</dbReference>
<dbReference type="PIRSF" id="PIRSF009467">
    <property type="entry name" value="Ureas_acces_UreF"/>
    <property type="match status" value="1"/>
</dbReference>
<protein>
    <recommendedName>
        <fullName evidence="1">Urease accessory protein UreF</fullName>
    </recommendedName>
</protein>
<organism>
    <name type="scientific">Staphylococcus saprophyticus subsp. saprophyticus (strain ATCC 15305 / DSM 20229 / NCIMB 8711 / NCTC 7292 / S-41)</name>
    <dbReference type="NCBI Taxonomy" id="342451"/>
    <lineage>
        <taxon>Bacteria</taxon>
        <taxon>Bacillati</taxon>
        <taxon>Bacillota</taxon>
        <taxon>Bacilli</taxon>
        <taxon>Bacillales</taxon>
        <taxon>Staphylococcaceae</taxon>
        <taxon>Staphylococcus</taxon>
    </lineage>
</organism>
<feature type="chain" id="PRO_0000344195" description="Urease accessory protein UreF">
    <location>
        <begin position="1"/>
        <end position="229"/>
    </location>
</feature>
<sequence length="229" mass="26409">MIDHAHLRLFQFCDSQFPTGAFSHSFGLETYIQRDTVHDEESFQQWLVLFLNEQLTYADGLTMRLVYDALNENDTKAILKLDRILFVQNLPKETRQGSKQMGNRMVKLASELYDSDWINWYHAQMKDKKASLHPAICFTMLGHHLGVDIETIIDYYLYQNVSSLTQNAVRAIPLGQTAGQRIVHKMIPIMKETRDHIMTIPASQLGITAPGLEINQMEHENVNVRIFIS</sequence>
<proteinExistence type="inferred from homology"/>
<reference key="1">
    <citation type="journal article" date="2005" name="Proc. Natl. Acad. Sci. U.S.A.">
        <title>Whole genome sequence of Staphylococcus saprophyticus reveals the pathogenesis of uncomplicated urinary tract infection.</title>
        <authorList>
            <person name="Kuroda M."/>
            <person name="Yamashita A."/>
            <person name="Hirakawa H."/>
            <person name="Kumano M."/>
            <person name="Morikawa K."/>
            <person name="Higashide M."/>
            <person name="Maruyama A."/>
            <person name="Inose Y."/>
            <person name="Matoba K."/>
            <person name="Toh H."/>
            <person name="Kuhara S."/>
            <person name="Hattori M."/>
            <person name="Ohta T."/>
        </authorList>
    </citation>
    <scope>NUCLEOTIDE SEQUENCE [LARGE SCALE GENOMIC DNA]</scope>
    <source>
        <strain>ATCC 15305 / DSM 20229 / NCIMB 8711 / NCTC 7292 / S-41</strain>
    </source>
</reference>
<gene>
    <name evidence="1" type="primary">ureF</name>
    <name type="ordered locus">SSP0261</name>
</gene>
<comment type="function">
    <text evidence="1">Required for maturation of urease via the functional incorporation of the urease nickel metallocenter.</text>
</comment>
<comment type="subunit">
    <text evidence="1">UreD, UreF and UreG form a complex that acts as a GTP-hydrolysis-dependent molecular chaperone, activating the urease apoprotein by helping to assemble the nickel containing metallocenter of UreC. The UreE protein probably delivers the nickel.</text>
</comment>
<comment type="subcellular location">
    <subcellularLocation>
        <location evidence="1">Cytoplasm</location>
    </subcellularLocation>
</comment>
<comment type="similarity">
    <text evidence="1">Belongs to the UreF family.</text>
</comment>